<gene>
    <name type="primary">PHO85</name>
    <name type="ordered locus">AGL242C</name>
</gene>
<accession>Q751E8</accession>
<protein>
    <recommendedName>
        <fullName>Negative regulator of the PHO system</fullName>
        <ecNumber>2.7.11.22</ecNumber>
    </recommendedName>
    <alternativeName>
        <fullName>Serine/threonine-protein kinase PHO85</fullName>
    </alternativeName>
</protein>
<organism>
    <name type="scientific">Eremothecium gossypii (strain ATCC 10895 / CBS 109.51 / FGSC 9923 / NRRL Y-1056)</name>
    <name type="common">Yeast</name>
    <name type="synonym">Ashbya gossypii</name>
    <dbReference type="NCBI Taxonomy" id="284811"/>
    <lineage>
        <taxon>Eukaryota</taxon>
        <taxon>Fungi</taxon>
        <taxon>Dikarya</taxon>
        <taxon>Ascomycota</taxon>
        <taxon>Saccharomycotina</taxon>
        <taxon>Saccharomycetes</taxon>
        <taxon>Saccharomycetales</taxon>
        <taxon>Saccharomycetaceae</taxon>
        <taxon>Eremothecium</taxon>
    </lineage>
</organism>
<reference key="1">
    <citation type="journal article" date="2004" name="Science">
        <title>The Ashbya gossypii genome as a tool for mapping the ancient Saccharomyces cerevisiae genome.</title>
        <authorList>
            <person name="Dietrich F.S."/>
            <person name="Voegeli S."/>
            <person name="Brachat S."/>
            <person name="Lerch A."/>
            <person name="Gates K."/>
            <person name="Steiner S."/>
            <person name="Mohr C."/>
            <person name="Poehlmann R."/>
            <person name="Luedi P."/>
            <person name="Choi S."/>
            <person name="Wing R.A."/>
            <person name="Flavier A."/>
            <person name="Gaffney T.D."/>
            <person name="Philippsen P."/>
        </authorList>
    </citation>
    <scope>NUCLEOTIDE SEQUENCE [LARGE SCALE GENOMIC DNA]</scope>
    <source>
        <strain>ATCC 10895 / CBS 109.51 / FGSC 9923 / NRRL Y-1056</strain>
    </source>
</reference>
<reference key="2">
    <citation type="journal article" date="2013" name="G3 (Bethesda)">
        <title>Genomes of Ashbya fungi isolated from insects reveal four mating-type loci, numerous translocations, lack of transposons, and distinct gene duplications.</title>
        <authorList>
            <person name="Dietrich F.S."/>
            <person name="Voegeli S."/>
            <person name="Kuo S."/>
            <person name="Philippsen P."/>
        </authorList>
    </citation>
    <scope>GENOME REANNOTATION</scope>
    <scope>SEQUENCE REVISION TO 6</scope>
    <source>
        <strain>ATCC 10895 / CBS 109.51 / FGSC 9923 / NRRL Y-1056</strain>
    </source>
</reference>
<proteinExistence type="inferred from homology"/>
<keyword id="KW-0067">ATP-binding</keyword>
<keyword id="KW-0418">Kinase</keyword>
<keyword id="KW-0547">Nucleotide-binding</keyword>
<keyword id="KW-1185">Reference proteome</keyword>
<keyword id="KW-0723">Serine/threonine-protein kinase</keyword>
<keyword id="KW-0808">Transferase</keyword>
<name>PHO85_EREGS</name>
<feature type="chain" id="PRO_0000086515" description="Negative regulator of the PHO system">
    <location>
        <begin position="1"/>
        <end position="301"/>
    </location>
</feature>
<feature type="domain" description="Protein kinase" evidence="2">
    <location>
        <begin position="7"/>
        <end position="297"/>
    </location>
</feature>
<feature type="active site" description="Proton acceptor" evidence="2 3">
    <location>
        <position position="133"/>
    </location>
</feature>
<feature type="binding site" evidence="2">
    <location>
        <begin position="13"/>
        <end position="21"/>
    </location>
    <ligand>
        <name>ATP</name>
        <dbReference type="ChEBI" id="CHEBI:30616"/>
    </ligand>
</feature>
<feature type="binding site" evidence="2">
    <location>
        <position position="36"/>
    </location>
    <ligand>
        <name>ATP</name>
        <dbReference type="ChEBI" id="CHEBI:30616"/>
    </ligand>
</feature>
<dbReference type="EC" id="2.7.11.22"/>
<dbReference type="EMBL" id="AE016820">
    <property type="protein sequence ID" value="AAS54249.2"/>
    <property type="molecule type" value="Genomic_DNA"/>
</dbReference>
<dbReference type="RefSeq" id="NP_986425.2">
    <property type="nucleotide sequence ID" value="NM_211487.2"/>
</dbReference>
<dbReference type="SMR" id="Q751E8"/>
<dbReference type="FunCoup" id="Q751E8">
    <property type="interactions" value="552"/>
</dbReference>
<dbReference type="STRING" id="284811.Q751E8"/>
<dbReference type="EnsemblFungi" id="AAS54249">
    <property type="protein sequence ID" value="AAS54249"/>
    <property type="gene ID" value="AGOS_AGL242C"/>
</dbReference>
<dbReference type="GeneID" id="4622718"/>
<dbReference type="KEGG" id="ago:AGOS_AGL242C"/>
<dbReference type="eggNOG" id="KOG0594">
    <property type="taxonomic scope" value="Eukaryota"/>
</dbReference>
<dbReference type="HOGENOM" id="CLU_000288_181_1_1"/>
<dbReference type="InParanoid" id="Q751E8"/>
<dbReference type="OMA" id="NWQIFVP"/>
<dbReference type="OrthoDB" id="1732493at2759"/>
<dbReference type="Proteomes" id="UP000000591">
    <property type="component" value="Chromosome VII"/>
</dbReference>
<dbReference type="GO" id="GO:0005935">
    <property type="term" value="C:cellular bud neck"/>
    <property type="evidence" value="ECO:0007669"/>
    <property type="project" value="EnsemblFungi"/>
</dbReference>
<dbReference type="GO" id="GO:0005737">
    <property type="term" value="C:cytoplasm"/>
    <property type="evidence" value="ECO:0000318"/>
    <property type="project" value="GO_Central"/>
</dbReference>
<dbReference type="GO" id="GO:0005634">
    <property type="term" value="C:nucleus"/>
    <property type="evidence" value="ECO:0000318"/>
    <property type="project" value="GO_Central"/>
</dbReference>
<dbReference type="GO" id="GO:1990860">
    <property type="term" value="C:Pho85-Pho80 CDK-cyclin complex"/>
    <property type="evidence" value="ECO:0007669"/>
    <property type="project" value="EnsemblFungi"/>
</dbReference>
<dbReference type="GO" id="GO:0005524">
    <property type="term" value="F:ATP binding"/>
    <property type="evidence" value="ECO:0007669"/>
    <property type="project" value="UniProtKB-KW"/>
</dbReference>
<dbReference type="GO" id="GO:0004693">
    <property type="term" value="F:cyclin-dependent protein serine/threonine kinase activity"/>
    <property type="evidence" value="ECO:0000318"/>
    <property type="project" value="GO_Central"/>
</dbReference>
<dbReference type="GO" id="GO:0106310">
    <property type="term" value="F:protein serine kinase activity"/>
    <property type="evidence" value="ECO:0007669"/>
    <property type="project" value="RHEA"/>
</dbReference>
<dbReference type="GO" id="GO:0006974">
    <property type="term" value="P:DNA damage response"/>
    <property type="evidence" value="ECO:0007669"/>
    <property type="project" value="EnsemblFungi"/>
</dbReference>
<dbReference type="GO" id="GO:0000082">
    <property type="term" value="P:G1/S transition of mitotic cell cycle"/>
    <property type="evidence" value="ECO:0007669"/>
    <property type="project" value="EnsemblFungi"/>
</dbReference>
<dbReference type="GO" id="GO:0055088">
    <property type="term" value="P:lipid homeostasis"/>
    <property type="evidence" value="ECO:0007669"/>
    <property type="project" value="EnsemblFungi"/>
</dbReference>
<dbReference type="GO" id="GO:0050849">
    <property type="term" value="P:negative regulation of calcium-mediated signaling"/>
    <property type="evidence" value="ECO:0007669"/>
    <property type="project" value="EnsemblFungi"/>
</dbReference>
<dbReference type="GO" id="GO:0045719">
    <property type="term" value="P:negative regulation of glycogen biosynthetic process"/>
    <property type="evidence" value="ECO:0007669"/>
    <property type="project" value="EnsemblFungi"/>
</dbReference>
<dbReference type="GO" id="GO:0016242">
    <property type="term" value="P:negative regulation of macroautophagy"/>
    <property type="evidence" value="ECO:0007669"/>
    <property type="project" value="EnsemblFungi"/>
</dbReference>
<dbReference type="GO" id="GO:0045936">
    <property type="term" value="P:negative regulation of phosphate metabolic process"/>
    <property type="evidence" value="ECO:0007669"/>
    <property type="project" value="EnsemblFungi"/>
</dbReference>
<dbReference type="GO" id="GO:0000122">
    <property type="term" value="P:negative regulation of transcription by RNA polymerase II"/>
    <property type="evidence" value="ECO:0007669"/>
    <property type="project" value="EnsemblFungi"/>
</dbReference>
<dbReference type="GO" id="GO:0016239">
    <property type="term" value="P:positive regulation of macroautophagy"/>
    <property type="evidence" value="ECO:0007669"/>
    <property type="project" value="EnsemblFungi"/>
</dbReference>
<dbReference type="GO" id="GO:0071073">
    <property type="term" value="P:positive regulation of phospholipid biosynthetic process"/>
    <property type="evidence" value="ECO:0007669"/>
    <property type="project" value="EnsemblFungi"/>
</dbReference>
<dbReference type="GO" id="GO:0031648">
    <property type="term" value="P:protein destabilization"/>
    <property type="evidence" value="ECO:0007669"/>
    <property type="project" value="EnsemblFungi"/>
</dbReference>
<dbReference type="GO" id="GO:1901987">
    <property type="term" value="P:regulation of cell cycle phase transition"/>
    <property type="evidence" value="ECO:0000318"/>
    <property type="project" value="GO_Central"/>
</dbReference>
<dbReference type="GO" id="GO:0051302">
    <property type="term" value="P:regulation of cell division"/>
    <property type="evidence" value="ECO:0007669"/>
    <property type="project" value="EnsemblFungi"/>
</dbReference>
<dbReference type="GO" id="GO:0032878">
    <property type="term" value="P:regulation of establishment or maintenance of cell polarity"/>
    <property type="evidence" value="ECO:0007669"/>
    <property type="project" value="EnsemblFungi"/>
</dbReference>
<dbReference type="GO" id="GO:0046822">
    <property type="term" value="P:regulation of nucleocytoplasmic transport"/>
    <property type="evidence" value="ECO:0007669"/>
    <property type="project" value="EnsemblFungi"/>
</dbReference>
<dbReference type="GO" id="GO:0032880">
    <property type="term" value="P:regulation of protein localization"/>
    <property type="evidence" value="ECO:0007669"/>
    <property type="project" value="EnsemblFungi"/>
</dbReference>
<dbReference type="FunFam" id="1.10.510.10:FF:000524">
    <property type="entry name" value="Cell division protein kinase 2"/>
    <property type="match status" value="1"/>
</dbReference>
<dbReference type="FunFam" id="3.30.200.20:FF:000062">
    <property type="entry name" value="PHO system negative regulator"/>
    <property type="match status" value="1"/>
</dbReference>
<dbReference type="Gene3D" id="3.30.200.20">
    <property type="entry name" value="Phosphorylase Kinase, domain 1"/>
    <property type="match status" value="1"/>
</dbReference>
<dbReference type="Gene3D" id="1.10.510.10">
    <property type="entry name" value="Transferase(Phosphotransferase) domain 1"/>
    <property type="match status" value="1"/>
</dbReference>
<dbReference type="InterPro" id="IPR050108">
    <property type="entry name" value="CDK"/>
</dbReference>
<dbReference type="InterPro" id="IPR011009">
    <property type="entry name" value="Kinase-like_dom_sf"/>
</dbReference>
<dbReference type="InterPro" id="IPR000719">
    <property type="entry name" value="Prot_kinase_dom"/>
</dbReference>
<dbReference type="InterPro" id="IPR017441">
    <property type="entry name" value="Protein_kinase_ATP_BS"/>
</dbReference>
<dbReference type="InterPro" id="IPR008271">
    <property type="entry name" value="Ser/Thr_kinase_AS"/>
</dbReference>
<dbReference type="PANTHER" id="PTHR24056">
    <property type="entry name" value="CELL DIVISION PROTEIN KINASE"/>
    <property type="match status" value="1"/>
</dbReference>
<dbReference type="PANTHER" id="PTHR24056:SF46">
    <property type="entry name" value="CYCLIN-DEPENDENT KINASE 5"/>
    <property type="match status" value="1"/>
</dbReference>
<dbReference type="Pfam" id="PF00069">
    <property type="entry name" value="Pkinase"/>
    <property type="match status" value="1"/>
</dbReference>
<dbReference type="SMART" id="SM00220">
    <property type="entry name" value="S_TKc"/>
    <property type="match status" value="1"/>
</dbReference>
<dbReference type="SUPFAM" id="SSF56112">
    <property type="entry name" value="Protein kinase-like (PK-like)"/>
    <property type="match status" value="1"/>
</dbReference>
<dbReference type="PROSITE" id="PS00107">
    <property type="entry name" value="PROTEIN_KINASE_ATP"/>
    <property type="match status" value="1"/>
</dbReference>
<dbReference type="PROSITE" id="PS50011">
    <property type="entry name" value="PROTEIN_KINASE_DOM"/>
    <property type="match status" value="1"/>
</dbReference>
<dbReference type="PROSITE" id="PS00108">
    <property type="entry name" value="PROTEIN_KINASE_ST"/>
    <property type="match status" value="1"/>
</dbReference>
<evidence type="ECO:0000250" key="1"/>
<evidence type="ECO:0000255" key="2">
    <source>
        <dbReference type="PROSITE-ProRule" id="PRU00159"/>
    </source>
</evidence>
<evidence type="ECO:0000255" key="3">
    <source>
        <dbReference type="PROSITE-ProRule" id="PRU10027"/>
    </source>
</evidence>
<evidence type="ECO:0000305" key="4"/>
<sequence>MTSTSQFKQLERLGNGTYATVYKGLNKTTGLYVALKEVKLDSEEGTPSTAIREISLMKELKHENIVRLYDVIHTENKLTLVFEFMDNDLKKFMDSRLDREMPRGLELSLVKYFQWQLLQGVAFCHENRILHRDLKPQNLLINNKGQLKLGDFGLARAFGIPVNTFSSEVVTLWYRAPDVLMGSRTYCTSIDIWSCGCILAEMIMGKALFPGTNDDEQLKLIFETMGTPTEQTWVGVSQLPKYNPQIPLYPNKDIKQLLQATTKEQISDVLVNLIQGLLQLNPSMRLSAQQALSHPLFEEYH</sequence>
<comment type="function">
    <text evidence="1">When phosphate concentrations are high it phosphorylates the PHO4 transcription factor thus establishing repression.</text>
</comment>
<comment type="catalytic activity">
    <reaction>
        <text>L-seryl-[protein] + ATP = O-phospho-L-seryl-[protein] + ADP + H(+)</text>
        <dbReference type="Rhea" id="RHEA:17989"/>
        <dbReference type="Rhea" id="RHEA-COMP:9863"/>
        <dbReference type="Rhea" id="RHEA-COMP:11604"/>
        <dbReference type="ChEBI" id="CHEBI:15378"/>
        <dbReference type="ChEBI" id="CHEBI:29999"/>
        <dbReference type="ChEBI" id="CHEBI:30616"/>
        <dbReference type="ChEBI" id="CHEBI:83421"/>
        <dbReference type="ChEBI" id="CHEBI:456216"/>
        <dbReference type="EC" id="2.7.11.22"/>
    </reaction>
</comment>
<comment type="catalytic activity">
    <reaction>
        <text>L-threonyl-[protein] + ATP = O-phospho-L-threonyl-[protein] + ADP + H(+)</text>
        <dbReference type="Rhea" id="RHEA:46608"/>
        <dbReference type="Rhea" id="RHEA-COMP:11060"/>
        <dbReference type="Rhea" id="RHEA-COMP:11605"/>
        <dbReference type="ChEBI" id="CHEBI:15378"/>
        <dbReference type="ChEBI" id="CHEBI:30013"/>
        <dbReference type="ChEBI" id="CHEBI:30616"/>
        <dbReference type="ChEBI" id="CHEBI:61977"/>
        <dbReference type="ChEBI" id="CHEBI:456216"/>
        <dbReference type="EC" id="2.7.11.22"/>
    </reaction>
</comment>
<comment type="subunit">
    <text evidence="1">Interacts with a number of cyclins.</text>
</comment>
<comment type="similarity">
    <text evidence="4">Belongs to the protein kinase superfamily. CMGC Ser/Thr protein kinase family. CDC2/CDKX subfamily.</text>
</comment>